<sequence length="135" mass="15132">MVQLTTVLCKAYRGGHLTIRLALGGCTNRPFYRIVAAHNKCPRDGRFVEQLGSYDPMPNSHGEKLVALNLDRIRHWIGCGAHLSKPVEKLLGLSGFFPLHPMVITNAERLRRKRAQEVLLAAQKTDTEATETKEN</sequence>
<keyword id="KW-0002">3D-structure</keyword>
<keyword id="KW-0903">Direct protein sequencing</keyword>
<keyword id="KW-0496">Mitochondrion</keyword>
<keyword id="KW-0597">Phosphoprotein</keyword>
<keyword id="KW-1185">Reference proteome</keyword>
<keyword id="KW-0687">Ribonucleoprotein</keyword>
<keyword id="KW-0689">Ribosomal protein</keyword>
<keyword id="KW-0809">Transit peptide</keyword>
<organism>
    <name type="scientific">Bos taurus</name>
    <name type="common">Bovine</name>
    <dbReference type="NCBI Taxonomy" id="9913"/>
    <lineage>
        <taxon>Eukaryota</taxon>
        <taxon>Metazoa</taxon>
        <taxon>Chordata</taxon>
        <taxon>Craniata</taxon>
        <taxon>Vertebrata</taxon>
        <taxon>Euteleostomi</taxon>
        <taxon>Mammalia</taxon>
        <taxon>Eutheria</taxon>
        <taxon>Laurasiatheria</taxon>
        <taxon>Artiodactyla</taxon>
        <taxon>Ruminantia</taxon>
        <taxon>Pecora</taxon>
        <taxon>Bovidae</taxon>
        <taxon>Bovinae</taxon>
        <taxon>Bos</taxon>
    </lineage>
</organism>
<comment type="subunit">
    <text evidence="3 4">Component of the mitochondrial ribosome small subunit (28S) which comprises a 12S rRNA and about 30 distinct proteins.</text>
</comment>
<comment type="subcellular location">
    <subcellularLocation>
        <location evidence="3 4">Mitochondrion</location>
    </subcellularLocation>
</comment>
<comment type="similarity">
    <text evidence="5">Belongs to the bacterial ribosomal protein bS16 family.</text>
</comment>
<dbReference type="EMBL" id="BC118470">
    <property type="protein sequence ID" value="AAI18471.1"/>
    <property type="molecule type" value="mRNA"/>
</dbReference>
<dbReference type="RefSeq" id="NP_001068942.1">
    <property type="nucleotide sequence ID" value="NM_001075474.2"/>
</dbReference>
<dbReference type="PDB" id="3JD5">
    <property type="method" value="EM"/>
    <property type="resolution" value="7.00 A"/>
    <property type="chains" value="P=1-135"/>
</dbReference>
<dbReference type="PDB" id="6NEQ">
    <property type="method" value="EM"/>
    <property type="resolution" value="3.32 A"/>
    <property type="chains" value="P=1-135"/>
</dbReference>
<dbReference type="PDB" id="6NF8">
    <property type="method" value="EM"/>
    <property type="resolution" value="3.48 A"/>
    <property type="chains" value="P=1-135"/>
</dbReference>
<dbReference type="PDBsum" id="3JD5"/>
<dbReference type="PDBsum" id="6NEQ"/>
<dbReference type="PDBsum" id="6NF8"/>
<dbReference type="EMDB" id="EMD-9358"/>
<dbReference type="EMDB" id="EMD-9362"/>
<dbReference type="SMR" id="P82915"/>
<dbReference type="CORUM" id="P82915"/>
<dbReference type="FunCoup" id="P82915">
    <property type="interactions" value="2455"/>
</dbReference>
<dbReference type="IntAct" id="P82915">
    <property type="interactions" value="2"/>
</dbReference>
<dbReference type="STRING" id="9913.ENSBTAP00000001255"/>
<dbReference type="iPTMnet" id="P82915"/>
<dbReference type="PaxDb" id="9913-ENSBTAP00000001255"/>
<dbReference type="Ensembl" id="ENSBTAT00000001255.5">
    <property type="protein sequence ID" value="ENSBTAP00000001255.3"/>
    <property type="gene ID" value="ENSBTAG00000000950.5"/>
</dbReference>
<dbReference type="GeneID" id="510899"/>
<dbReference type="KEGG" id="bta:510899"/>
<dbReference type="CTD" id="51021"/>
<dbReference type="VEuPathDB" id="HostDB:ENSBTAG00000000950"/>
<dbReference type="VGNC" id="VGNC:31657">
    <property type="gene designation" value="MRPS16"/>
</dbReference>
<dbReference type="eggNOG" id="KOG3419">
    <property type="taxonomic scope" value="Eukaryota"/>
</dbReference>
<dbReference type="GeneTree" id="ENSGT00390000014309"/>
<dbReference type="HOGENOM" id="CLU_100590_4_0_1"/>
<dbReference type="InParanoid" id="P82915"/>
<dbReference type="OMA" id="PNDYNER"/>
<dbReference type="OrthoDB" id="407221at2759"/>
<dbReference type="TreeFam" id="TF105637"/>
<dbReference type="Reactome" id="R-BTA-5389840">
    <property type="pathway name" value="Mitochondrial translation elongation"/>
</dbReference>
<dbReference type="Reactome" id="R-BTA-5419276">
    <property type="pathway name" value="Mitochondrial translation termination"/>
</dbReference>
<dbReference type="Proteomes" id="UP000009136">
    <property type="component" value="Chromosome 28"/>
</dbReference>
<dbReference type="Bgee" id="ENSBTAG00000000950">
    <property type="expression patterns" value="Expressed in oocyte and 106 other cell types or tissues"/>
</dbReference>
<dbReference type="GO" id="GO:0005829">
    <property type="term" value="C:cytosol"/>
    <property type="evidence" value="ECO:0007669"/>
    <property type="project" value="Ensembl"/>
</dbReference>
<dbReference type="GO" id="GO:0005743">
    <property type="term" value="C:mitochondrial inner membrane"/>
    <property type="evidence" value="ECO:0000304"/>
    <property type="project" value="Reactome"/>
</dbReference>
<dbReference type="GO" id="GO:0005763">
    <property type="term" value="C:mitochondrial small ribosomal subunit"/>
    <property type="evidence" value="ECO:0000314"/>
    <property type="project" value="UniProtKB"/>
</dbReference>
<dbReference type="GO" id="GO:0003735">
    <property type="term" value="F:structural constituent of ribosome"/>
    <property type="evidence" value="ECO:0007005"/>
    <property type="project" value="UniProtKB"/>
</dbReference>
<dbReference type="GO" id="GO:0032543">
    <property type="term" value="P:mitochondrial translation"/>
    <property type="evidence" value="ECO:0007005"/>
    <property type="project" value="UniProtKB"/>
</dbReference>
<dbReference type="FunFam" id="3.30.1320.10:FF:000004">
    <property type="entry name" value="28S ribosomal protein S16, mitochondrial"/>
    <property type="match status" value="1"/>
</dbReference>
<dbReference type="Gene3D" id="3.30.1320.10">
    <property type="match status" value="1"/>
</dbReference>
<dbReference type="HAMAP" id="MF_00385">
    <property type="entry name" value="Ribosomal_bS16"/>
    <property type="match status" value="1"/>
</dbReference>
<dbReference type="InterPro" id="IPR000307">
    <property type="entry name" value="Ribosomal_bS16"/>
</dbReference>
<dbReference type="InterPro" id="IPR023803">
    <property type="entry name" value="Ribosomal_bS16_dom_sf"/>
</dbReference>
<dbReference type="NCBIfam" id="TIGR00002">
    <property type="entry name" value="S16"/>
    <property type="match status" value="1"/>
</dbReference>
<dbReference type="PANTHER" id="PTHR12919">
    <property type="entry name" value="30S RIBOSOMAL PROTEIN S16"/>
    <property type="match status" value="1"/>
</dbReference>
<dbReference type="PANTHER" id="PTHR12919:SF20">
    <property type="entry name" value="SMALL RIBOSOMAL SUBUNIT PROTEIN BS16M"/>
    <property type="match status" value="1"/>
</dbReference>
<dbReference type="Pfam" id="PF00886">
    <property type="entry name" value="Ribosomal_S16"/>
    <property type="match status" value="1"/>
</dbReference>
<dbReference type="SUPFAM" id="SSF54565">
    <property type="entry name" value="Ribosomal protein S16"/>
    <property type="match status" value="1"/>
</dbReference>
<protein>
    <recommendedName>
        <fullName evidence="5">Small ribosomal subunit protein bS16m</fullName>
    </recommendedName>
    <alternativeName>
        <fullName>28S ribosomal protein S16, mitochondrial</fullName>
        <shortName>MRP-S16</shortName>
        <shortName>S16mt</shortName>
    </alternativeName>
</protein>
<evidence type="ECO:0000250" key="1">
    <source>
        <dbReference type="UniProtKB" id="Q9Y3D3"/>
    </source>
</evidence>
<evidence type="ECO:0000255" key="2"/>
<evidence type="ECO:0000269" key="3">
    <source>
    </source>
</evidence>
<evidence type="ECO:0000269" key="4">
    <source>
    </source>
</evidence>
<evidence type="ECO:0000305" key="5"/>
<evidence type="ECO:0007744" key="6">
    <source>
        <dbReference type="PDB" id="3JD5"/>
    </source>
</evidence>
<evidence type="ECO:0007829" key="7">
    <source>
        <dbReference type="PDB" id="6NEQ"/>
    </source>
</evidence>
<evidence type="ECO:0007829" key="8">
    <source>
        <dbReference type="PDB" id="6NF8"/>
    </source>
</evidence>
<reference key="1">
    <citation type="submission" date="2006-06" db="EMBL/GenBank/DDBJ databases">
        <authorList>
            <consortium name="NIH - Mammalian Gene Collection (MGC) project"/>
        </authorList>
    </citation>
    <scope>NUCLEOTIDE SEQUENCE [LARGE SCALE MRNA]</scope>
    <source>
        <strain>Hereford</strain>
        <tissue>Fetal lung</tissue>
    </source>
</reference>
<reference key="2">
    <citation type="journal article" date="2001" name="J. Biol. Chem.">
        <title>The small subunit of the mammalian mitochondrial ribosome: identification of the full complement of ribosomal proteins present.</title>
        <authorList>
            <person name="Koc E.C."/>
            <person name="Burkhart W."/>
            <person name="Blackburn K."/>
            <person name="Moseley A."/>
            <person name="Spremulli L.L."/>
        </authorList>
    </citation>
    <scope>PROTEIN SEQUENCE OF 56-64 AND 114-124</scope>
    <scope>IDENTIFICATION IN THE 28S MITOCHONDRIAL RIBOSOME</scope>
    <scope>SUBCELLULAR LOCATION</scope>
    <scope>SUBUNIT</scope>
    <source>
        <tissue>Liver</tissue>
    </source>
</reference>
<reference evidence="6" key="3">
    <citation type="journal article" date="2014" name="Proc. Natl. Acad. Sci. U.S.A.">
        <title>Cryo-EM structure of the small subunit of the mammalian mitochondrial ribosome.</title>
        <authorList>
            <person name="Kaushal P.S."/>
            <person name="Sharma M.R."/>
            <person name="Booth T.M."/>
            <person name="Haque E.M."/>
            <person name="Tung C.S."/>
            <person name="Sanbonmatsu K.Y."/>
            <person name="Spremulli L.L."/>
            <person name="Agrawal R.K."/>
        </authorList>
    </citation>
    <scope>STRUCTURE BY ELECTRON MICROSCOPY (7.00 ANGSTROMS)</scope>
    <scope>SUBCELLULAR LOCATION</scope>
    <scope>SUBUNIT</scope>
</reference>
<gene>
    <name type="primary">MRPS16</name>
    <name type="synonym">RPMS16</name>
</gene>
<proteinExistence type="evidence at protein level"/>
<name>RT16_BOVIN</name>
<accession>P82915</accession>
<accession>Q17QA2</accession>
<feature type="transit peptide" description="Mitochondrion" evidence="2">
    <location>
        <begin position="1"/>
        <end position="34"/>
    </location>
</feature>
<feature type="chain" id="PRO_0000167327" description="Small ribosomal subunit protein bS16m">
    <location>
        <begin position="35"/>
        <end position="135"/>
    </location>
</feature>
<feature type="modified residue" description="Phosphothreonine" evidence="1">
    <location>
        <position position="130"/>
    </location>
</feature>
<feature type="sequence conflict" description="In Ref. 2; AA sequence." evidence="5" ref="2">
    <original>GE</original>
    <variation>AD</variation>
    <location>
        <begin position="62"/>
        <end position="63"/>
    </location>
</feature>
<feature type="strand" evidence="7">
    <location>
        <begin position="17"/>
        <end position="20"/>
    </location>
</feature>
<feature type="strand" evidence="8">
    <location>
        <begin position="34"/>
        <end position="37"/>
    </location>
</feature>
<feature type="strand" evidence="7">
    <location>
        <begin position="38"/>
        <end position="41"/>
    </location>
</feature>
<feature type="strand" evidence="8">
    <location>
        <begin position="43"/>
        <end position="45"/>
    </location>
</feature>
<feature type="strand" evidence="8">
    <location>
        <begin position="48"/>
        <end position="50"/>
    </location>
</feature>
<feature type="strand" evidence="7">
    <location>
        <begin position="52"/>
        <end position="54"/>
    </location>
</feature>
<feature type="strand" evidence="7">
    <location>
        <begin position="62"/>
        <end position="68"/>
    </location>
</feature>
<feature type="helix" evidence="7">
    <location>
        <begin position="70"/>
        <end position="77"/>
    </location>
</feature>
<feature type="helix" evidence="7">
    <location>
        <begin position="85"/>
        <end position="94"/>
    </location>
</feature>
<feature type="strand" evidence="7">
    <location>
        <begin position="95"/>
        <end position="97"/>
    </location>
</feature>
<feature type="helix" evidence="7">
    <location>
        <begin position="101"/>
        <end position="123"/>
    </location>
</feature>